<feature type="chain" id="PRO_0000197850" description="Exodeoxyribonuclease 7 large subunit">
    <location>
        <begin position="1"/>
        <end position="420"/>
    </location>
</feature>
<organism>
    <name type="scientific">Helicobacter pylori (strain ATCC 700392 / 26695)</name>
    <name type="common">Campylobacter pylori</name>
    <dbReference type="NCBI Taxonomy" id="85962"/>
    <lineage>
        <taxon>Bacteria</taxon>
        <taxon>Pseudomonadati</taxon>
        <taxon>Campylobacterota</taxon>
        <taxon>Epsilonproteobacteria</taxon>
        <taxon>Campylobacterales</taxon>
        <taxon>Helicobacteraceae</taxon>
        <taxon>Helicobacter</taxon>
    </lineage>
</organism>
<comment type="function">
    <text evidence="1">Bidirectionally degrades single-stranded DNA into large acid-insoluble oligonucleotides, which are then degraded further into small acid-soluble oligonucleotides.</text>
</comment>
<comment type="catalytic activity">
    <reaction evidence="1">
        <text>Exonucleolytic cleavage in either 5'- to 3'- or 3'- to 5'-direction to yield nucleoside 5'-phosphates.</text>
        <dbReference type="EC" id="3.1.11.6"/>
    </reaction>
</comment>
<comment type="subunit">
    <text evidence="1">Heterooligomer composed of large and small subunits.</text>
</comment>
<comment type="subcellular location">
    <subcellularLocation>
        <location evidence="1">Cytoplasm</location>
    </subcellularLocation>
</comment>
<comment type="similarity">
    <text evidence="1">Belongs to the XseA family.</text>
</comment>
<dbReference type="EC" id="3.1.11.6" evidence="1"/>
<dbReference type="EMBL" id="AE000511">
    <property type="protein sequence ID" value="AAD07327.1"/>
    <property type="molecule type" value="Genomic_DNA"/>
</dbReference>
<dbReference type="PIR" id="C64552">
    <property type="entry name" value="C64552"/>
</dbReference>
<dbReference type="RefSeq" id="NP_207057.1">
    <property type="nucleotide sequence ID" value="NC_000915.1"/>
</dbReference>
<dbReference type="RefSeq" id="WP_000382848.1">
    <property type="nucleotide sequence ID" value="NC_018939.1"/>
</dbReference>
<dbReference type="SMR" id="O25039"/>
<dbReference type="DIP" id="DIP-3158N"/>
<dbReference type="FunCoup" id="O25039">
    <property type="interactions" value="188"/>
</dbReference>
<dbReference type="IntAct" id="O25039">
    <property type="interactions" value="2"/>
</dbReference>
<dbReference type="MINT" id="O25039"/>
<dbReference type="STRING" id="85962.HP_0259"/>
<dbReference type="PaxDb" id="85962-C694_01310"/>
<dbReference type="EnsemblBacteria" id="AAD07327">
    <property type="protein sequence ID" value="AAD07327"/>
    <property type="gene ID" value="HP_0259"/>
</dbReference>
<dbReference type="KEGG" id="heo:C694_01310"/>
<dbReference type="KEGG" id="hpy:HP_0259"/>
<dbReference type="PATRIC" id="fig|85962.47.peg.279"/>
<dbReference type="eggNOG" id="COG1570">
    <property type="taxonomic scope" value="Bacteria"/>
</dbReference>
<dbReference type="InParanoid" id="O25039"/>
<dbReference type="OrthoDB" id="9802795at2"/>
<dbReference type="PhylomeDB" id="O25039"/>
<dbReference type="Proteomes" id="UP000000429">
    <property type="component" value="Chromosome"/>
</dbReference>
<dbReference type="GO" id="GO:0005737">
    <property type="term" value="C:cytoplasm"/>
    <property type="evidence" value="ECO:0007669"/>
    <property type="project" value="UniProtKB-SubCell"/>
</dbReference>
<dbReference type="GO" id="GO:0009318">
    <property type="term" value="C:exodeoxyribonuclease VII complex"/>
    <property type="evidence" value="ECO:0007669"/>
    <property type="project" value="InterPro"/>
</dbReference>
<dbReference type="GO" id="GO:0008855">
    <property type="term" value="F:exodeoxyribonuclease VII activity"/>
    <property type="evidence" value="ECO:0007669"/>
    <property type="project" value="UniProtKB-UniRule"/>
</dbReference>
<dbReference type="GO" id="GO:0003676">
    <property type="term" value="F:nucleic acid binding"/>
    <property type="evidence" value="ECO:0007669"/>
    <property type="project" value="InterPro"/>
</dbReference>
<dbReference type="GO" id="GO:0006308">
    <property type="term" value="P:DNA catabolic process"/>
    <property type="evidence" value="ECO:0007669"/>
    <property type="project" value="UniProtKB-UniRule"/>
</dbReference>
<dbReference type="CDD" id="cd04489">
    <property type="entry name" value="ExoVII_LU_OBF"/>
    <property type="match status" value="1"/>
</dbReference>
<dbReference type="Gene3D" id="2.40.50.1010">
    <property type="match status" value="1"/>
</dbReference>
<dbReference type="HAMAP" id="MF_00378">
    <property type="entry name" value="Exonuc_7_L"/>
    <property type="match status" value="1"/>
</dbReference>
<dbReference type="InterPro" id="IPR003753">
    <property type="entry name" value="Exonuc_VII_L"/>
</dbReference>
<dbReference type="InterPro" id="IPR020579">
    <property type="entry name" value="Exonuc_VII_lsu_C"/>
</dbReference>
<dbReference type="InterPro" id="IPR025824">
    <property type="entry name" value="OB-fold_nuc-bd_dom"/>
</dbReference>
<dbReference type="NCBIfam" id="TIGR00237">
    <property type="entry name" value="xseA"/>
    <property type="match status" value="1"/>
</dbReference>
<dbReference type="PANTHER" id="PTHR30008">
    <property type="entry name" value="EXODEOXYRIBONUCLEASE 7 LARGE SUBUNIT"/>
    <property type="match status" value="1"/>
</dbReference>
<dbReference type="PANTHER" id="PTHR30008:SF0">
    <property type="entry name" value="EXODEOXYRIBONUCLEASE 7 LARGE SUBUNIT"/>
    <property type="match status" value="1"/>
</dbReference>
<dbReference type="Pfam" id="PF02601">
    <property type="entry name" value="Exonuc_VII_L"/>
    <property type="match status" value="1"/>
</dbReference>
<dbReference type="Pfam" id="PF13742">
    <property type="entry name" value="tRNA_anti_2"/>
    <property type="match status" value="1"/>
</dbReference>
<name>EX7L_HELPY</name>
<gene>
    <name evidence="1" type="primary">xseA</name>
    <name type="ordered locus">HP_0259</name>
</gene>
<proteinExistence type="inferred from homology"/>
<reference key="1">
    <citation type="journal article" date="1997" name="Nature">
        <title>The complete genome sequence of the gastric pathogen Helicobacter pylori.</title>
        <authorList>
            <person name="Tomb J.-F."/>
            <person name="White O."/>
            <person name="Kerlavage A.R."/>
            <person name="Clayton R.A."/>
            <person name="Sutton G.G."/>
            <person name="Fleischmann R.D."/>
            <person name="Ketchum K.A."/>
            <person name="Klenk H.-P."/>
            <person name="Gill S.R."/>
            <person name="Dougherty B.A."/>
            <person name="Nelson K.E."/>
            <person name="Quackenbush J."/>
            <person name="Zhou L."/>
            <person name="Kirkness E.F."/>
            <person name="Peterson S.N."/>
            <person name="Loftus B.J."/>
            <person name="Richardson D.L."/>
            <person name="Dodson R.J."/>
            <person name="Khalak H.G."/>
            <person name="Glodek A."/>
            <person name="McKenney K."/>
            <person name="FitzGerald L.M."/>
            <person name="Lee N."/>
            <person name="Adams M.D."/>
            <person name="Hickey E.K."/>
            <person name="Berg D.E."/>
            <person name="Gocayne J.D."/>
            <person name="Utterback T.R."/>
            <person name="Peterson J.D."/>
            <person name="Kelley J.M."/>
            <person name="Cotton M.D."/>
            <person name="Weidman J.F."/>
            <person name="Fujii C."/>
            <person name="Bowman C."/>
            <person name="Watthey L."/>
            <person name="Wallin E."/>
            <person name="Hayes W.S."/>
            <person name="Borodovsky M."/>
            <person name="Karp P.D."/>
            <person name="Smith H.O."/>
            <person name="Fraser C.M."/>
            <person name="Venter J.C."/>
        </authorList>
    </citation>
    <scope>NUCLEOTIDE SEQUENCE [LARGE SCALE GENOMIC DNA]</scope>
    <source>
        <strain>ATCC 700392 / 26695</strain>
    </source>
</reference>
<evidence type="ECO:0000255" key="1">
    <source>
        <dbReference type="HAMAP-Rule" id="MF_00378"/>
    </source>
</evidence>
<sequence>MDVLSVSEINAQIKALLEATFLQVRVQGEVSNLTIHKVSGHAYFSLKDSQSVIKCVLFKGNANRLKFALKEGQEVVVFGGISVYVPRGDYQINCFEIEPKDIGSLTLALEQLKEKLRLKGYFDEENKLPKPHFPKRVAVITSQNSAAWADMKKIASKRWPMCELVCINTLMQGEGCVQSVVESIVYADSFHDTKNAFDAIVVARGGGSMEDLYSFNDEKIADALYLAKTFSMSAIGHESDFLLSDLVADLRASTPSNAMEILLPSSDEWLQRLDGFNVKLHRSFKTLLHQKKAHLEHLVASLKRLSFENKHHLNALKLEKLKIALENKTLEFLRFKKTLLEKISTQTLTSPFLQTKTERLNRLENALKLAHANLKLPQFGALVSKNNQAIELEALKRGDKIELSNEKTRASAEILSVDRV</sequence>
<accession>O25039</accession>
<protein>
    <recommendedName>
        <fullName evidence="1">Exodeoxyribonuclease 7 large subunit</fullName>
        <ecNumber evidence="1">3.1.11.6</ecNumber>
    </recommendedName>
    <alternativeName>
        <fullName evidence="1">Exodeoxyribonuclease VII large subunit</fullName>
        <shortName evidence="1">Exonuclease VII large subunit</shortName>
    </alternativeName>
</protein>
<keyword id="KW-0963">Cytoplasm</keyword>
<keyword id="KW-0269">Exonuclease</keyword>
<keyword id="KW-0378">Hydrolase</keyword>
<keyword id="KW-0540">Nuclease</keyword>
<keyword id="KW-1185">Reference proteome</keyword>